<organismHost>
    <name type="scientific">Bos taurus</name>
    <name type="common">Bovine</name>
    <dbReference type="NCBI Taxonomy" id="9913"/>
</organismHost>
<sequence>MPAARTGTLAAVALILLCGAAVLGRPAPDDLCFADVRRTGMAPSRPLGPVLNLAASDLTSRVSVRAVDASRGCALALLDMAETVVPGGPRAADVVDVGWAYQDGDCMVPLAYRQYFNCTGGALPGQNVCAGLSETRIRGGFGTSDYALYGTSLVLRPGLYDRGTYIYFLGYGPDDIYVGSVTLMVGADIHKYPCGLDRGLGVALHHKSGPARPLTEDDATGDWACGCFPAVVEVDVVWGNVSAAELGLADPIDYADEGGEVEVLEDEAGSASGNLPQDDPDPDLADCRTVGLFSESDMFRTARGPESLLIGAVAKDVLTVPLNLPPGRSYEALRNASLECNSRPRETGDAAVVVMSLQEPARLERRPDARATDPEFGLFGLPDDPAVRRGILIGLAIALLVLLFSLVIVLVCACRLARAAKAARRARAATFAKSNPAYEPMLRV</sequence>
<proteinExistence type="inferred from homology"/>
<feature type="signal peptide" evidence="1">
    <location>
        <begin position="1"/>
        <end position="24"/>
    </location>
</feature>
<feature type="chain" id="PRO_0000038294" description="Glycoprotein GX">
    <location>
        <begin position="25"/>
        <end position="444"/>
    </location>
</feature>
<feature type="transmembrane region" description="Helical" evidence="1">
    <location>
        <begin position="390"/>
        <end position="414"/>
    </location>
</feature>
<feature type="glycosylation site" description="N-linked (GlcNAc...) asparagine; by host" evidence="1">
    <location>
        <position position="117"/>
    </location>
</feature>
<feature type="glycosylation site" description="N-linked (GlcNAc...) asparagine; by host" evidence="1">
    <location>
        <position position="240"/>
    </location>
</feature>
<feature type="glycosylation site" description="N-linked (GlcNAc...) asparagine; by host" evidence="1">
    <location>
        <position position="335"/>
    </location>
</feature>
<organism>
    <name type="scientific">Bovine herpesvirus 1.2 (strain ST)</name>
    <name type="common">BoHV-1</name>
    <name type="synonym">Infectious bovine rhinotracheitis virus</name>
    <dbReference type="NCBI Taxonomy" id="45407"/>
    <lineage>
        <taxon>Viruses</taxon>
        <taxon>Duplodnaviria</taxon>
        <taxon>Heunggongvirae</taxon>
        <taxon>Peploviricota</taxon>
        <taxon>Herviviricetes</taxon>
        <taxon>Herpesvirales</taxon>
        <taxon>Orthoherpesviridae</taxon>
        <taxon>Alphaherpesvirinae</taxon>
        <taxon>Varicellovirus</taxon>
        <taxon>Varicellovirus bovinealpha1</taxon>
    </lineage>
</organism>
<comment type="subcellular location">
    <subcellularLocation>
        <location evidence="2">Membrane</location>
        <topology evidence="2">Single-pass membrane protein</topology>
    </subcellularLocation>
</comment>
<comment type="similarity">
    <text evidence="2">Belongs to the herpesviridae glycoprotein G family.</text>
</comment>
<keyword id="KW-0325">Glycoprotein</keyword>
<keyword id="KW-0472">Membrane</keyword>
<keyword id="KW-0732">Signal</keyword>
<keyword id="KW-0812">Transmembrane</keyword>
<keyword id="KW-1133">Transmembrane helix</keyword>
<name>VGLX_BHV1S</name>
<reference key="1">
    <citation type="journal article" date="1994" name="Virology">
        <title>The complete DNA sequence and the genetic organization of the short unique region (US) of the bovine herpesvirus type 1 (ST strain).</title>
        <authorList>
            <person name="Leung-Tack P."/>
            <person name="Audonnet J.F."/>
            <person name="Riviere M."/>
        </authorList>
    </citation>
    <scope>NUCLEOTIDE SEQUENCE [GENOMIC DNA]</scope>
</reference>
<accession>Q08103</accession>
<evidence type="ECO:0000255" key="1"/>
<evidence type="ECO:0000305" key="2"/>
<dbReference type="EMBL" id="Z23068">
    <property type="protein sequence ID" value="CAA80603.1"/>
    <property type="molecule type" value="Genomic_DNA"/>
</dbReference>
<dbReference type="PIR" id="S35783">
    <property type="entry name" value="S35783"/>
</dbReference>
<dbReference type="SMR" id="Q08103"/>
<dbReference type="GO" id="GO:0016020">
    <property type="term" value="C:membrane"/>
    <property type="evidence" value="ECO:0007669"/>
    <property type="project" value="UniProtKB-SubCell"/>
</dbReference>
<dbReference type="InterPro" id="IPR002896">
    <property type="entry name" value="Herpes_glycop_dom"/>
</dbReference>
<dbReference type="InterPro" id="IPR036179">
    <property type="entry name" value="Ig-like_dom_sf"/>
</dbReference>
<dbReference type="Pfam" id="PF01537">
    <property type="entry name" value="Herpes_glycop_D"/>
    <property type="match status" value="1"/>
</dbReference>
<dbReference type="SUPFAM" id="SSF48726">
    <property type="entry name" value="Immunoglobulin"/>
    <property type="match status" value="1"/>
</dbReference>
<protein>
    <recommendedName>
        <fullName>Glycoprotein GX</fullName>
    </recommendedName>
</protein>